<accession>P73825</accession>
<proteinExistence type="inferred from homology"/>
<feature type="chain" id="PRO_0000438830" description="Acetyl-CoA acetyltransferase">
    <location>
        <begin position="1"/>
        <end position="396"/>
    </location>
</feature>
<feature type="active site" description="Acyl-thioester intermediate" evidence="1">
    <location>
        <position position="88"/>
    </location>
</feature>
<feature type="active site" description="Proton acceptor" evidence="1">
    <location>
        <position position="352"/>
    </location>
</feature>
<feature type="active site" description="Proton acceptor" evidence="1">
    <location>
        <position position="382"/>
    </location>
</feature>
<sequence>MRDVFIVAAKRTPLGRFGGSLTNFSAADLGAHVMKSVLAQAGVGGDQLDLYIMGNVLRAGHGQLIPRQAALKAEIPDTVDGYAVDMVCSSAMMSVINAALTIRAGEGDLILAGGTESMSQTGFYLSHRARWGYKFLMGAPENLTDLLLHDGLTDSTNGEGMGEQTEKLAAEHGFSRIELDEVACLSQQRAAHATESGYFDSEIAPIEITSRKGTQVLASDEGIRSDTTVESLGKLRSAFAKDGVLTAGNCSQITDGAAALLLASGEAVEKYQLKPLAKILGGSWAAGTPSRFPELPITASQKLLAKLDKTLADFDLFENNEAFSVSNLLFERRLGVDRDKLNVNGGAIALGHPIGASGARIMVTLLYALQQRDKTLGLAALCHGTGGGTAIALERV</sequence>
<protein>
    <recommendedName>
        <fullName evidence="2">Acetyl-CoA acetyltransferase</fullName>
        <ecNumber evidence="2">2.3.1.9</ecNumber>
    </recommendedName>
    <alternativeName>
        <fullName evidence="4">Beta-ketothiolase PhaA</fullName>
    </alternativeName>
</protein>
<dbReference type="EC" id="2.3.1.9" evidence="2"/>
<dbReference type="EMBL" id="BA000022">
    <property type="protein sequence ID" value="BAA17882.1"/>
    <property type="status" value="ALT_INIT"/>
    <property type="molecule type" value="Genomic_DNA"/>
</dbReference>
<dbReference type="PIR" id="S75020">
    <property type="entry name" value="S75020"/>
</dbReference>
<dbReference type="SMR" id="P73825"/>
<dbReference type="FunCoup" id="P73825">
    <property type="interactions" value="350"/>
</dbReference>
<dbReference type="IntAct" id="P73825">
    <property type="interactions" value="1"/>
</dbReference>
<dbReference type="STRING" id="1148.gene:10498751"/>
<dbReference type="PaxDb" id="1148-1652965"/>
<dbReference type="EnsemblBacteria" id="BAA17882">
    <property type="protein sequence ID" value="BAA17882"/>
    <property type="gene ID" value="BAA17882"/>
</dbReference>
<dbReference type="KEGG" id="syn:slr1993"/>
<dbReference type="eggNOG" id="COG0183">
    <property type="taxonomic scope" value="Bacteria"/>
</dbReference>
<dbReference type="InParanoid" id="P73825"/>
<dbReference type="PhylomeDB" id="P73825"/>
<dbReference type="UniPathway" id="UPA00917"/>
<dbReference type="Proteomes" id="UP000001425">
    <property type="component" value="Chromosome"/>
</dbReference>
<dbReference type="GO" id="GO:0003985">
    <property type="term" value="F:acetyl-CoA C-acetyltransferase activity"/>
    <property type="evidence" value="ECO:0000318"/>
    <property type="project" value="GO_Central"/>
</dbReference>
<dbReference type="GO" id="GO:0042619">
    <property type="term" value="P:poly-hydroxybutyrate biosynthetic process"/>
    <property type="evidence" value="ECO:0007669"/>
    <property type="project" value="UniProtKB-KW"/>
</dbReference>
<dbReference type="CDD" id="cd00751">
    <property type="entry name" value="thiolase"/>
    <property type="match status" value="1"/>
</dbReference>
<dbReference type="Gene3D" id="3.40.47.10">
    <property type="match status" value="2"/>
</dbReference>
<dbReference type="InterPro" id="IPR049957">
    <property type="entry name" value="PhaA"/>
</dbReference>
<dbReference type="InterPro" id="IPR002155">
    <property type="entry name" value="Thiolase"/>
</dbReference>
<dbReference type="InterPro" id="IPR016039">
    <property type="entry name" value="Thiolase-like"/>
</dbReference>
<dbReference type="InterPro" id="IPR020610">
    <property type="entry name" value="Thiolase_AS"/>
</dbReference>
<dbReference type="InterPro" id="IPR020617">
    <property type="entry name" value="Thiolase_C"/>
</dbReference>
<dbReference type="InterPro" id="IPR020613">
    <property type="entry name" value="Thiolase_CS"/>
</dbReference>
<dbReference type="InterPro" id="IPR020616">
    <property type="entry name" value="Thiolase_N"/>
</dbReference>
<dbReference type="NCBIfam" id="TIGR01930">
    <property type="entry name" value="AcCoA-C-Actrans"/>
    <property type="match status" value="1"/>
</dbReference>
<dbReference type="NCBIfam" id="NF042967">
    <property type="entry name" value="AcCoAtase_PhaA"/>
    <property type="match status" value="1"/>
</dbReference>
<dbReference type="PANTHER" id="PTHR18919:SF107">
    <property type="entry name" value="ACETYL-COA ACETYLTRANSFERASE, CYTOSOLIC"/>
    <property type="match status" value="1"/>
</dbReference>
<dbReference type="PANTHER" id="PTHR18919">
    <property type="entry name" value="ACETYL-COA C-ACYLTRANSFERASE"/>
    <property type="match status" value="1"/>
</dbReference>
<dbReference type="Pfam" id="PF02803">
    <property type="entry name" value="Thiolase_C"/>
    <property type="match status" value="1"/>
</dbReference>
<dbReference type="Pfam" id="PF00108">
    <property type="entry name" value="Thiolase_N"/>
    <property type="match status" value="1"/>
</dbReference>
<dbReference type="PIRSF" id="PIRSF000429">
    <property type="entry name" value="Ac-CoA_Ac_transf"/>
    <property type="match status" value="1"/>
</dbReference>
<dbReference type="SUPFAM" id="SSF53901">
    <property type="entry name" value="Thiolase-like"/>
    <property type="match status" value="2"/>
</dbReference>
<dbReference type="PROSITE" id="PS00737">
    <property type="entry name" value="THIOLASE_2"/>
    <property type="match status" value="1"/>
</dbReference>
<dbReference type="PROSITE" id="PS00099">
    <property type="entry name" value="THIOLASE_3"/>
    <property type="match status" value="1"/>
</dbReference>
<evidence type="ECO:0000250" key="1">
    <source>
        <dbReference type="UniProtKB" id="P14611"/>
    </source>
</evidence>
<evidence type="ECO:0000255" key="2">
    <source>
        <dbReference type="PROSITE-ProRule" id="PRU10020"/>
    </source>
</evidence>
<evidence type="ECO:0000269" key="3">
    <source>
    </source>
</evidence>
<evidence type="ECO:0000303" key="4">
    <source>
    </source>
</evidence>
<evidence type="ECO:0000305" key="5"/>
<reference key="1">
    <citation type="journal article" date="1996" name="DNA Res.">
        <title>Sequence analysis of the genome of the unicellular cyanobacterium Synechocystis sp. strain PCC6803. II. Sequence determination of the entire genome and assignment of potential protein-coding regions.</title>
        <authorList>
            <person name="Kaneko T."/>
            <person name="Sato S."/>
            <person name="Kotani H."/>
            <person name="Tanaka A."/>
            <person name="Asamizu E."/>
            <person name="Nakamura Y."/>
            <person name="Miyajima N."/>
            <person name="Hirosawa M."/>
            <person name="Sugiura M."/>
            <person name="Sasamoto S."/>
            <person name="Kimura T."/>
            <person name="Hosouchi T."/>
            <person name="Matsuno A."/>
            <person name="Muraki A."/>
            <person name="Nakazaki N."/>
            <person name="Naruo K."/>
            <person name="Okumura S."/>
            <person name="Shimpo S."/>
            <person name="Takeuchi C."/>
            <person name="Wada T."/>
            <person name="Watanabe A."/>
            <person name="Yamada M."/>
            <person name="Yasuda M."/>
            <person name="Tabata S."/>
        </authorList>
    </citation>
    <scope>NUCLEOTIDE SEQUENCE [LARGE SCALE GENOMIC DNA]</scope>
    <source>
        <strain>ATCC 27184 / PCC 6803 / Kazusa</strain>
    </source>
</reference>
<reference key="2">
    <citation type="journal article" date="2000" name="Appl. Environ. Microbiol.">
        <title>Identification and analysis of the polyhydroxyalkanoate-specific beta-ketothiolase and acetoacetyl coenzyme A reductase genes in the cyanobacterium Synechocystis sp. strain PCC6803.</title>
        <authorList>
            <person name="Taroncher-Oldenburg G."/>
            <person name="Nishina K."/>
            <person name="Stephanopoulos G."/>
        </authorList>
    </citation>
    <scope>FUNCTION</scope>
    <scope>DISRUPTION PHENOTYPE</scope>
    <scope>EXPRESSION IN E.COLI</scope>
    <source>
        <strain>ATCC 27184 / PCC 6803 / N-1</strain>
    </source>
</reference>
<comment type="function">
    <text evidence="3">When expressed in E.coli with Synechocystis PhaB, PhaC and PhaE confers the ability to synthesize up to 12% (w/w) poly(3-hydroxybutyrate) (PHB) depending on the carbon source.</text>
</comment>
<comment type="catalytic activity">
    <reaction evidence="2">
        <text>2 acetyl-CoA = acetoacetyl-CoA + CoA</text>
        <dbReference type="Rhea" id="RHEA:21036"/>
        <dbReference type="ChEBI" id="CHEBI:57286"/>
        <dbReference type="ChEBI" id="CHEBI:57287"/>
        <dbReference type="ChEBI" id="CHEBI:57288"/>
        <dbReference type="EC" id="2.3.1.9"/>
    </reaction>
</comment>
<comment type="pathway">
    <text evidence="3">Biopolymer metabolism; poly-(R)-3-hydroxybutanoate biosynthesis.</text>
</comment>
<comment type="subunit">
    <text evidence="1">Homotetramer (By similarity).</text>
</comment>
<comment type="disruption phenotype">
    <text evidence="3">Double deletion of phaA and phaB leads to loss of synthesis of PHB, no visible growth phenotype.</text>
</comment>
<comment type="biotechnology">
    <text evidence="5">Poly(3-hydroxyalkanoic acids) (PHA), of which PHB is among the most common compounds, are prokaryotic intracellular storage compounds with potential uses as renewable, biodegradable thermoplastics. Cyanobacterial PHB synthesis is particularly attractive as cyanobacteria use CO(2) as the carbon source.</text>
</comment>
<comment type="miscellaneous">
    <text evidence="5">Nitrogen-free medium induces chlorosis in Synechocystis, leading to the degradation of the photosynthetic apparatus and concomitant accumulation of cytoplasmic polyhydroxyalkanoic acid (PHA) granules which in this cyanobacterium are composed of PHB.</text>
</comment>
<comment type="similarity">
    <text evidence="5">Belongs to the thiolase-like superfamily. Thiolase family.</text>
</comment>
<comment type="sequence caution" evidence="5">
    <conflict type="erroneous initiation">
        <sequence resource="EMBL-CDS" id="BAA17882"/>
    </conflict>
    <text>Extended N-terminus.</text>
</comment>
<gene>
    <name evidence="4" type="primary">phaA</name>
    <name type="ordered locus">slr1993</name>
</gene>
<name>THIL_SYNY3</name>
<keyword id="KW-0012">Acyltransferase</keyword>
<keyword id="KW-0583">PHB biosynthesis</keyword>
<keyword id="KW-1185">Reference proteome</keyword>
<keyword id="KW-0808">Transferase</keyword>
<organism>
    <name type="scientific">Synechocystis sp. (strain ATCC 27184 / PCC 6803 / Kazusa)</name>
    <dbReference type="NCBI Taxonomy" id="1111708"/>
    <lineage>
        <taxon>Bacteria</taxon>
        <taxon>Bacillati</taxon>
        <taxon>Cyanobacteriota</taxon>
        <taxon>Cyanophyceae</taxon>
        <taxon>Synechococcales</taxon>
        <taxon>Merismopediaceae</taxon>
        <taxon>Synechocystis</taxon>
    </lineage>
</organism>